<dbReference type="EMBL" id="AL138899">
    <property type="status" value="NOT_ANNOTATED_CDS"/>
    <property type="molecule type" value="Genomic_DNA"/>
</dbReference>
<dbReference type="CCDS" id="CCDS91073.1"/>
<dbReference type="RefSeq" id="NP_001382344.1">
    <property type="nucleotide sequence ID" value="NM_001395415.1"/>
</dbReference>
<dbReference type="SMR" id="A0A5F9ZH02"/>
<dbReference type="Ensembl" id="ENST00000672824.1">
    <property type="protein sequence ID" value="ENSP00000499955.1"/>
    <property type="gene ID" value="ENSG00000288460.1"/>
</dbReference>
<dbReference type="GeneID" id="117981789"/>
<dbReference type="MANE-Select" id="ENST00000672824.1">
    <property type="protein sequence ID" value="ENSP00000499955.1"/>
    <property type="RefSeq nucleotide sequence ID" value="NM_001395415.1"/>
    <property type="RefSeq protein sequence ID" value="NP_001382344.1"/>
</dbReference>
<dbReference type="AGR" id="HGNC:55000"/>
<dbReference type="GeneCards" id="SMIM42"/>
<dbReference type="HGNC" id="HGNC:55000">
    <property type="gene designation" value="SMIM42"/>
</dbReference>
<dbReference type="HPA" id="ENSG00000288460">
    <property type="expression patterns" value="Tissue enriched (testis)"/>
</dbReference>
<dbReference type="neXtProt" id="NX_A0A5F9ZH02"/>
<dbReference type="VEuPathDB" id="HostDB:ENSG00000288460"/>
<dbReference type="GeneTree" id="ENSGT01000000222236"/>
<dbReference type="InParanoid" id="A0A5F9ZH02"/>
<dbReference type="OMA" id="QLPAFLW"/>
<dbReference type="OrthoDB" id="9805716at2759"/>
<dbReference type="PRO" id="PR:A0A5F9ZH02"/>
<dbReference type="Proteomes" id="UP000005640">
    <property type="component" value="Chromosome 1"/>
</dbReference>
<dbReference type="Bgee" id="ENSG00000288460">
    <property type="expression patterns" value="Expressed in male germ line stem cell (sensu Vertebrata) in testis and 12 other cell types or tissues"/>
</dbReference>
<dbReference type="GO" id="GO:0016020">
    <property type="term" value="C:membrane"/>
    <property type="evidence" value="ECO:0007669"/>
    <property type="project" value="UniProtKB-SubCell"/>
</dbReference>
<proteinExistence type="inferred from homology"/>
<protein>
    <recommendedName>
        <fullName evidence="2">Small integral membrane protein 42</fullName>
    </recommendedName>
</protein>
<keyword id="KW-0472">Membrane</keyword>
<keyword id="KW-1185">Reference proteome</keyword>
<keyword id="KW-0812">Transmembrane</keyword>
<keyword id="KW-1133">Transmembrane helix</keyword>
<feature type="chain" id="PRO_0000451611" description="Small integral membrane protein 42">
    <location>
        <begin position="1"/>
        <end position="70"/>
    </location>
</feature>
<feature type="transmembrane region" description="Helical" evidence="1">
    <location>
        <begin position="26"/>
        <end position="46"/>
    </location>
</feature>
<evidence type="ECO:0000255" key="1"/>
<evidence type="ECO:0000305" key="2"/>
<evidence type="ECO:0000312" key="3">
    <source>
        <dbReference type="HGNC" id="HGNC:55000"/>
    </source>
</evidence>
<reference key="1">
    <citation type="journal article" date="2006" name="Nature">
        <title>The DNA sequence and biological annotation of human chromosome 1.</title>
        <authorList>
            <person name="Gregory S.G."/>
            <person name="Barlow K.F."/>
            <person name="McLay K.E."/>
            <person name="Kaul R."/>
            <person name="Swarbreck D."/>
            <person name="Dunham A."/>
            <person name="Scott C.E."/>
            <person name="Howe K.L."/>
            <person name="Woodfine K."/>
            <person name="Spencer C.C.A."/>
            <person name="Jones M.C."/>
            <person name="Gillson C."/>
            <person name="Searle S."/>
            <person name="Zhou Y."/>
            <person name="Kokocinski F."/>
            <person name="McDonald L."/>
            <person name="Evans R."/>
            <person name="Phillips K."/>
            <person name="Atkinson A."/>
            <person name="Cooper R."/>
            <person name="Jones C."/>
            <person name="Hall R.E."/>
            <person name="Andrews T.D."/>
            <person name="Lloyd C."/>
            <person name="Ainscough R."/>
            <person name="Almeida J.P."/>
            <person name="Ambrose K.D."/>
            <person name="Anderson F."/>
            <person name="Andrew R.W."/>
            <person name="Ashwell R.I.S."/>
            <person name="Aubin K."/>
            <person name="Babbage A.K."/>
            <person name="Bagguley C.L."/>
            <person name="Bailey J."/>
            <person name="Beasley H."/>
            <person name="Bethel G."/>
            <person name="Bird C.P."/>
            <person name="Bray-Allen S."/>
            <person name="Brown J.Y."/>
            <person name="Brown A.J."/>
            <person name="Buckley D."/>
            <person name="Burton J."/>
            <person name="Bye J."/>
            <person name="Carder C."/>
            <person name="Chapman J.C."/>
            <person name="Clark S.Y."/>
            <person name="Clarke G."/>
            <person name="Clee C."/>
            <person name="Cobley V."/>
            <person name="Collier R.E."/>
            <person name="Corby N."/>
            <person name="Coville G.J."/>
            <person name="Davies J."/>
            <person name="Deadman R."/>
            <person name="Dunn M."/>
            <person name="Earthrowl M."/>
            <person name="Ellington A.G."/>
            <person name="Errington H."/>
            <person name="Frankish A."/>
            <person name="Frankland J."/>
            <person name="French L."/>
            <person name="Garner P."/>
            <person name="Garnett J."/>
            <person name="Gay L."/>
            <person name="Ghori M.R.J."/>
            <person name="Gibson R."/>
            <person name="Gilby L.M."/>
            <person name="Gillett W."/>
            <person name="Glithero R.J."/>
            <person name="Grafham D.V."/>
            <person name="Griffiths C."/>
            <person name="Griffiths-Jones S."/>
            <person name="Grocock R."/>
            <person name="Hammond S."/>
            <person name="Harrison E.S.I."/>
            <person name="Hart E."/>
            <person name="Haugen E."/>
            <person name="Heath P.D."/>
            <person name="Holmes S."/>
            <person name="Holt K."/>
            <person name="Howden P.J."/>
            <person name="Hunt A.R."/>
            <person name="Hunt S.E."/>
            <person name="Hunter G."/>
            <person name="Isherwood J."/>
            <person name="James R."/>
            <person name="Johnson C."/>
            <person name="Johnson D."/>
            <person name="Joy A."/>
            <person name="Kay M."/>
            <person name="Kershaw J.K."/>
            <person name="Kibukawa M."/>
            <person name="Kimberley A.M."/>
            <person name="King A."/>
            <person name="Knights A.J."/>
            <person name="Lad H."/>
            <person name="Laird G."/>
            <person name="Lawlor S."/>
            <person name="Leongamornlert D.A."/>
            <person name="Lloyd D.M."/>
            <person name="Loveland J."/>
            <person name="Lovell J."/>
            <person name="Lush M.J."/>
            <person name="Lyne R."/>
            <person name="Martin S."/>
            <person name="Mashreghi-Mohammadi M."/>
            <person name="Matthews L."/>
            <person name="Matthews N.S.W."/>
            <person name="McLaren S."/>
            <person name="Milne S."/>
            <person name="Mistry S."/>
            <person name="Moore M.J.F."/>
            <person name="Nickerson T."/>
            <person name="O'Dell C.N."/>
            <person name="Oliver K."/>
            <person name="Palmeiri A."/>
            <person name="Palmer S.A."/>
            <person name="Parker A."/>
            <person name="Patel D."/>
            <person name="Pearce A.V."/>
            <person name="Peck A.I."/>
            <person name="Pelan S."/>
            <person name="Phelps K."/>
            <person name="Phillimore B.J."/>
            <person name="Plumb R."/>
            <person name="Rajan J."/>
            <person name="Raymond C."/>
            <person name="Rouse G."/>
            <person name="Saenphimmachak C."/>
            <person name="Sehra H.K."/>
            <person name="Sheridan E."/>
            <person name="Shownkeen R."/>
            <person name="Sims S."/>
            <person name="Skuce C.D."/>
            <person name="Smith M."/>
            <person name="Steward C."/>
            <person name="Subramanian S."/>
            <person name="Sycamore N."/>
            <person name="Tracey A."/>
            <person name="Tromans A."/>
            <person name="Van Helmond Z."/>
            <person name="Wall M."/>
            <person name="Wallis J.M."/>
            <person name="White S."/>
            <person name="Whitehead S.L."/>
            <person name="Wilkinson J.E."/>
            <person name="Willey D.L."/>
            <person name="Williams H."/>
            <person name="Wilming L."/>
            <person name="Wray P.W."/>
            <person name="Wu Z."/>
            <person name="Coulson A."/>
            <person name="Vaudin M."/>
            <person name="Sulston J.E."/>
            <person name="Durbin R.M."/>
            <person name="Hubbard T."/>
            <person name="Wooster R."/>
            <person name="Dunham I."/>
            <person name="Carter N.P."/>
            <person name="McVean G."/>
            <person name="Ross M.T."/>
            <person name="Harrow J."/>
            <person name="Olson M.V."/>
            <person name="Beck S."/>
            <person name="Rogers J."/>
            <person name="Bentley D.R."/>
        </authorList>
    </citation>
    <scope>NUCLEOTIDE SEQUENCE [LARGE SCALE GENOMIC DNA]</scope>
</reference>
<name>SIM42_HUMAN</name>
<gene>
    <name evidence="3" type="primary">SMIM42</name>
</gene>
<comment type="subcellular location">
    <subcellularLocation>
        <location evidence="1">Membrane</location>
        <topology evidence="1">Single-pass membrane protein</topology>
    </subcellularLocation>
</comment>
<accession>A0A5F9ZH02</accession>
<sequence>MSSPQLPAFLWDKGTLTTAISNPACLVNVLFFFTPLMTLVTLLILVWKVTKDKSNKNRETHPRKEATWLP</sequence>
<organism>
    <name type="scientific">Homo sapiens</name>
    <name type="common">Human</name>
    <dbReference type="NCBI Taxonomy" id="9606"/>
    <lineage>
        <taxon>Eukaryota</taxon>
        <taxon>Metazoa</taxon>
        <taxon>Chordata</taxon>
        <taxon>Craniata</taxon>
        <taxon>Vertebrata</taxon>
        <taxon>Euteleostomi</taxon>
        <taxon>Mammalia</taxon>
        <taxon>Eutheria</taxon>
        <taxon>Euarchontoglires</taxon>
        <taxon>Primates</taxon>
        <taxon>Haplorrhini</taxon>
        <taxon>Catarrhini</taxon>
        <taxon>Hominidae</taxon>
        <taxon>Homo</taxon>
    </lineage>
</organism>